<comment type="function">
    <text evidence="1">RNA-dependent RNA polymerase, which is responsible for the replication and transcription of the viral RNA genome using antigenomic RNA as an intermediate. During transcription, synthesizes subgenomic RNAs and assures their capping by a cap-snatching mechanism, which involves the endonuclease activity cleaving the host capped pre-mRNAs. These short capped RNAs are then used as primers for viral transcription. The 3'-end of subgenomic mRNAs molecules are heterogeneous and not polyadenylated. The replicase function is to direct synthesis of antigenomic and genomic RNA which are encapsidated and non capped. As a consequence of the use of the same enzyme for both transcription and replication, these mechanisms need to be well coordinated. These processes may be regulated by proteins N and Z in a dose-dependent manner. Z protein inhibits the viral polymerase L und thus the viral transcription and RNA synthesis.</text>
</comment>
<comment type="catalytic activity">
    <reaction evidence="1">
        <text>RNA(n) + a ribonucleoside 5'-triphosphate = RNA(n+1) + diphosphate</text>
        <dbReference type="Rhea" id="RHEA:21248"/>
        <dbReference type="Rhea" id="RHEA-COMP:14527"/>
        <dbReference type="Rhea" id="RHEA-COMP:17342"/>
        <dbReference type="ChEBI" id="CHEBI:33019"/>
        <dbReference type="ChEBI" id="CHEBI:61557"/>
        <dbReference type="ChEBI" id="CHEBI:140395"/>
        <dbReference type="EC" id="2.7.7.48"/>
    </reaction>
</comment>
<comment type="cofactor">
    <cofactor evidence="1">
        <name>Mn(2+)</name>
        <dbReference type="ChEBI" id="CHEBI:29035"/>
    </cofactor>
    <text evidence="1">For endonuclease activity. Binds 2 Mn(2+) ions in the active site. The divalent metal ions are crucial for catalytic activity.</text>
</comment>
<comment type="cofactor">
    <cofactor evidence="1">
        <name>Mg(2+)</name>
        <dbReference type="ChEBI" id="CHEBI:18420"/>
    </cofactor>
    <cofactor evidence="1">
        <name>Mn(2+)</name>
        <dbReference type="ChEBI" id="CHEBI:29035"/>
    </cofactor>
    <text evidence="1">For polymerase activity.</text>
</comment>
<comment type="subunit">
    <text evidence="1">Homomultimer; the oligomeric structure is essential for the polymerase activity. Interacts with nucleoprotein N. Interacts with protein Z; this interaction inhibits viral transcription and replication, Z partially blocks the product exit tunnel for the releasing nascent RNA product.</text>
</comment>
<comment type="subcellular location">
    <subcellularLocation>
        <location evidence="1">Virion</location>
    </subcellularLocation>
    <subcellularLocation>
        <location evidence="1">Host cytoplasm</location>
    </subcellularLocation>
</comment>
<comment type="domain">
    <text evidence="1">The N-terminus contains the endonuclease activity (endoN). The central region contains the RdRp activity.</text>
</comment>
<comment type="miscellaneous">
    <text evidence="1">Classified as His(-) endonuclease since it does not have a histidine upstream of the active site that coordinates the first cation. His(-) endonucleases display very low activity in vitro, although they are clearly active in vivo.</text>
</comment>
<comment type="similarity">
    <text evidence="1">Belongs to the Bunyavirales RNA polymerase family.</text>
</comment>
<reference key="1">
    <citation type="journal article" date="2003" name="Virology">
        <title>New insights into the evolutionary relationships between arenaviruses provided by comparative analysis of small and large segment sequences.</title>
        <authorList>
            <person name="Charrel R.N."/>
            <person name="Lemasson J.J."/>
            <person name="Garbutt M."/>
            <person name="Khelifa R."/>
            <person name="De Micco P."/>
            <person name="Feldmann H."/>
            <person name="de Lamballerie X."/>
        </authorList>
    </citation>
    <scope>NUCLEOTIDE SEQUENCE [GENOMIC RNA]</scope>
    <source>
        <strain>MC2</strain>
    </source>
</reference>
<reference key="2">
    <citation type="journal article" date="2008" name="Curr. Opin. Microbiol.">
        <title>Phylogeny of the genus Arenavirus.</title>
        <authorList>
            <person name="Charrel R.N."/>
            <person name="de Lamballerie X."/>
            <person name="Emonet S."/>
        </authorList>
    </citation>
    <scope>NUCLEOTIDE SEQUENCE [GENOMIC RNA]</scope>
    <source>
        <strain>MC2</strain>
    </source>
</reference>
<reference key="3">
    <citation type="journal article" date="2017" name="Crit. Rev. Microbiol.">
        <title>Bunyaviridae RdRps: structure, motifs, and RNA synthesis machinery.</title>
        <authorList>
            <person name="Amroun A."/>
            <person name="Priet S."/>
            <person name="de Lamballerie X."/>
            <person name="Querat G."/>
        </authorList>
    </citation>
    <scope>REVIEW</scope>
</reference>
<reference key="4">
    <citation type="journal article" date="2020" name="Trends Microbiol.">
        <title>The Cap-Snatching Mechanism of Bunyaviruses.</title>
        <authorList>
            <person name="Olschewski S."/>
            <person name="Cusack S."/>
            <person name="Rosenthal M."/>
        </authorList>
    </citation>
    <scope>REVIEW</scope>
</reference>
<sequence>MEESVNEIKNLIRKHFPERQELAYQRDIFLSQHHPSSLLLEGFKLLSSLVELESCEAHACQINSDQKFVDVILSDHGILCPTLPKVIPDGFKLTGKTLILLETFVRVNPDEFEKKWKSDMSKLLNLKSDLLRAGITLVPVVDGRSSYSNRFLADWVVERVRWLLIDILKKSKFMQEINIEEQEYQRLIHSLSNTKNQSLGLENIECLKKNSLGYDERLNESLFVGVRGDIRESVIREELIKLRFWFKKEIFDKQLGKFKFSQKSNLINDLVSLGSHKDSDVPSCPFCANKLMDVVYSIASHPIDEVNMKSQSDENSISIDAVERCYLQALSVCNKVKGLKVFNTRRNTLLFLDLVLLNLLCDLFKKHDDAIVRLRNAGIVVGQMLMLVNDRLLDILEAIKLIRKKLMTSPKWVQMCSRTLKNSHQDLWSQLEKLIKHPDMDSMMILAQALVSDRPVMRYTIDRESEKICRHQPFSSLVEGEQKKLFRILSSISLALVNSMKTSFSSRLLINEREYSRYFGNVRLRECYVQRFHLIKNTFGLLFYQKTGEKSRCYSIYLSINGVLEEQGSFYCDPKRFFLPIFSEDVLIEMCEEMTSWLDFSHELMTMTRPTLRLLVLAVLCSPSKRNQTFLQGLRYFLMAYANQIHHVDLMSKLRVDCMSGSEVLIQRMAVELFQTILSEGEDADLYFARRFKYLLNVSYLCHLVTKETPDRLTDQIKCFEKFIEPKVKFDCVVVNPPLNGSLTLEQEDIMIRGLDRFFSKEAKTSSDTQIPGVSKEILSFCISLFNRGRLKVTGELKSNPYRPNITSTALDLSSNKSVVIPKLDELGNILSVYDKEKLVSTCVSTMAERFKTKGRYNLDPDSMDYLILKNLTGLVSTGSRTRTNQEELSMMYESLTEDQVRAFEGIRNDVQMTLAKMANSEGSKVETTKLKSKNLSVDERESLESLWAPFGVLREIKAEVSMHEVKDFDPDVFRSDVYKELCDAVYLSPFKLTYFLEAPQDICPLGLLLKNLTTIAYQEDEFFECFKYLLIQGHYDQKLGSYEHRSRSRLGFSSEVLKLKDEVRLSTRESNSEAIADKLDKSYFTNAALRNLCFYSDDSPTEFTSISSNTGNLKFGLSYKEQVGSNRELYVGDLNTKLMTRLVEDFSEAVGSSMRYTCLNSEKEFERAICDMKMAVNNGDLSCSYDHSKWGPTMSPALFLSFLYTLELKNPRDRTKVNLEPVMNILKWHLHKVVEVPINVAEAYCVGKLKRSLGLMGCDCTSVGEEFFHQYLQSRDQVPSHIMSVLDMGQGILHNTSDLYGLITEQFLCYALDLLYDVIPVTYTSSDDQVSLIKIPCLSDEKCQDRTELLEMVCFHEFLSSKLNKFISPKSVIGTFVAEFKSRFFVMGEETPLLTKFVSAALHNVKCKTPTQLSETIDTICDQCIANGVSTHIVSKISIRVNQLIRYSGYRETPFGAIEEQDVKDWVDGSRGYRLQRKIEAIFSDDKETMFIRNCARKVFNDIKKGKIFEENLINLISRGGDEALSGFLQYAGCSEDEIRRTLDYRWVNLASFGDLRLVLRTKLMTSRRVLEKEEMPTLIKTIQSRLSRNFTKGVKKILAESINKSAFQSSVASGFIGFCKSMGSKCVRDGKGGFLYIKDIFTRIMPCLCEICEKKPKVIYCQKSLQEVNQFSKPILWDYFSLVLTNACELGEWVFSAVKSPQAPLVLCNKNFFWAVKPKAVRQIEDQLGMNHVLHSIRRNYPKLFEEHLAPFMNDLQVNRSLDSGRLKFLDVCVALDMMNENLGIISHLLKVRDNNVYIVKQSDCASAHVRQSEYTNWEVGISPQQVCRNFMVQVVLSSMINPLVMSTSCLKSFFWFNEVLDLEDDSQVDLAELTDFTLSIKNNKVSRAMFVEDIAMGYVVSSFDNIKVFLESVSVDNISLLPQEDMIDLHTVLRNVACQEAVKLKLIIQVEHTRVSTKFKLRRKMVYSYTIVSSLRVDDVSTPELELNVDAMSQCVSGSEGNHSLLDGALVIASLPLFTGHESFDLAGLFIDAGYAVTNDDNILSHVKLNFGDFYSELGNKYAYDLIGPNNPGEPLVLKEGIFYRGNERLSTYKVELSGDVIVKAIGALEDIDSVETLLCQLWPYLKTTSQTILFQQEDFVLVYDLHKEQLVRSLDKFGDWLEFSNFKVAFSRSLNDLLVSDPQGQFRLKGVTCRPLKHKVEIKDID</sequence>
<protein>
    <recommendedName>
        <fullName evidence="1">RNA-directed RNA polymerase L</fullName>
        <shortName evidence="1">Protein L</shortName>
        <ecNumber evidence="1">2.7.7.48</ecNumber>
    </recommendedName>
    <alternativeName>
        <fullName evidence="1">Large structural protein</fullName>
    </alternativeName>
    <alternativeName>
        <fullName evidence="1">Replicase</fullName>
    </alternativeName>
    <alternativeName>
        <fullName evidence="1">Transcriptase</fullName>
    </alternativeName>
    <domain>
        <recommendedName>
            <fullName evidence="1">cap-snatching endonuclease</fullName>
            <ecNumber evidence="1">3.1.-.-</ecNumber>
        </recommendedName>
    </domain>
</protein>
<proteinExistence type="inferred from homology"/>
<organism>
    <name type="scientific">Junin mammarenavirus</name>
    <name type="common">JUNV</name>
    <name type="synonym">Junn mammarenavirus</name>
    <dbReference type="NCBI Taxonomy" id="2169991"/>
    <lineage>
        <taxon>Viruses</taxon>
        <taxon>Riboviria</taxon>
        <taxon>Orthornavirae</taxon>
        <taxon>Negarnaviricota</taxon>
        <taxon>Polyploviricotina</taxon>
        <taxon>Ellioviricetes</taxon>
        <taxon>Bunyavirales</taxon>
        <taxon>Arenaviridae</taxon>
        <taxon>Mammarenavirus</taxon>
    </lineage>
</organism>
<name>L_JUNIN</name>
<organismHost>
    <name type="scientific">Akodon azarae</name>
    <name type="common">Azara's grass mouse</name>
    <dbReference type="NCBI Taxonomy" id="29095"/>
</organismHost>
<organismHost>
    <name type="scientific">Bolomys</name>
    <dbReference type="NCBI Taxonomy" id="10080"/>
</organismHost>
<organismHost>
    <name type="scientific">Calomys laucha</name>
    <name type="common">Small vesper mouse</name>
    <dbReference type="NCBI Taxonomy" id="56211"/>
</organismHost>
<organismHost>
    <name type="scientific">Calomys musculinus</name>
    <name type="common">Drylands vesper mouse</name>
    <dbReference type="NCBI Taxonomy" id="56212"/>
</organismHost>
<organismHost>
    <name type="scientific">Homo sapiens</name>
    <name type="common">Human</name>
    <dbReference type="NCBI Taxonomy" id="9606"/>
</organismHost>
<dbReference type="EC" id="2.7.7.48" evidence="1"/>
<dbReference type="EC" id="3.1.-.-" evidence="1"/>
<dbReference type="EMBL" id="AY216507">
    <property type="protein sequence ID" value="AAP44543.2"/>
    <property type="molecule type" value="Genomic_RNA"/>
</dbReference>
<dbReference type="SMR" id="Q6XQI4"/>
<dbReference type="Proteomes" id="UP000127886">
    <property type="component" value="Genome"/>
</dbReference>
<dbReference type="GO" id="GO:0030430">
    <property type="term" value="C:host cell cytoplasm"/>
    <property type="evidence" value="ECO:0007669"/>
    <property type="project" value="UniProtKB-SubCell"/>
</dbReference>
<dbReference type="GO" id="GO:0044423">
    <property type="term" value="C:virion component"/>
    <property type="evidence" value="ECO:0007669"/>
    <property type="project" value="UniProtKB-KW"/>
</dbReference>
<dbReference type="GO" id="GO:0016787">
    <property type="term" value="F:hydrolase activity"/>
    <property type="evidence" value="ECO:0007669"/>
    <property type="project" value="UniProtKB-KW"/>
</dbReference>
<dbReference type="GO" id="GO:0046872">
    <property type="term" value="F:metal ion binding"/>
    <property type="evidence" value="ECO:0007669"/>
    <property type="project" value="UniProtKB-KW"/>
</dbReference>
<dbReference type="GO" id="GO:0000166">
    <property type="term" value="F:nucleotide binding"/>
    <property type="evidence" value="ECO:0007669"/>
    <property type="project" value="UniProtKB-UniRule"/>
</dbReference>
<dbReference type="GO" id="GO:0003968">
    <property type="term" value="F:RNA-directed RNA polymerase activity"/>
    <property type="evidence" value="ECO:0007669"/>
    <property type="project" value="UniProtKB-UniRule"/>
</dbReference>
<dbReference type="GO" id="GO:0075526">
    <property type="term" value="P:cap snatching"/>
    <property type="evidence" value="ECO:0007669"/>
    <property type="project" value="UniProtKB-UniRule"/>
</dbReference>
<dbReference type="GO" id="GO:0039689">
    <property type="term" value="P:negative stranded viral RNA replication"/>
    <property type="evidence" value="ECO:0000250"/>
    <property type="project" value="UniProtKB"/>
</dbReference>
<dbReference type="GO" id="GO:0039696">
    <property type="term" value="P:RNA-templated viral transcription"/>
    <property type="evidence" value="ECO:0000250"/>
    <property type="project" value="UniProtKB"/>
</dbReference>
<dbReference type="FunFam" id="3.30.70.2640:FF:000001">
    <property type="entry name" value="RNA-directed RNA polymerase L"/>
    <property type="match status" value="1"/>
</dbReference>
<dbReference type="Gene3D" id="3.30.70.2640">
    <property type="entry name" value="Arenavirus RNA polymerase"/>
    <property type="match status" value="1"/>
</dbReference>
<dbReference type="Gene3D" id="1.20.1440.300">
    <property type="entry name" value="RNA-directed RNA polymerase L, helical domain"/>
    <property type="match status" value="1"/>
</dbReference>
<dbReference type="HAMAP" id="MF_04086">
    <property type="entry name" value="ARENA_L"/>
    <property type="match status" value="1"/>
</dbReference>
<dbReference type="InterPro" id="IPR026382">
    <property type="entry name" value="CapSnatch_arenavir"/>
</dbReference>
<dbReference type="InterPro" id="IPR048006">
    <property type="entry name" value="CapSnatch_bunyavir"/>
</dbReference>
<dbReference type="InterPro" id="IPR007099">
    <property type="entry name" value="RNA-dir_pol_NSvirus"/>
</dbReference>
<dbReference type="InterPro" id="IPR010453">
    <property type="entry name" value="RNA_pol_arenavir"/>
</dbReference>
<dbReference type="NCBIfam" id="TIGR04202">
    <property type="entry name" value="capSnatchArena"/>
    <property type="match status" value="1"/>
</dbReference>
<dbReference type="Pfam" id="PF06317">
    <property type="entry name" value="Arena_RNA_pol"/>
    <property type="match status" value="1"/>
</dbReference>
<dbReference type="Pfam" id="PF17296">
    <property type="entry name" value="ArenaCapSnatch"/>
    <property type="match status" value="1"/>
</dbReference>
<dbReference type="PIRSF" id="PIRSF000836">
    <property type="entry name" value="L_ArenaV"/>
    <property type="match status" value="1"/>
</dbReference>
<dbReference type="PROSITE" id="PS50525">
    <property type="entry name" value="RDRP_SSRNA_NEG_SEG"/>
    <property type="match status" value="1"/>
</dbReference>
<evidence type="ECO:0000255" key="1">
    <source>
        <dbReference type="HAMAP-Rule" id="MF_04086"/>
    </source>
</evidence>
<accession>Q6XQI4</accession>
<keyword id="KW-1157">Cap snatching</keyword>
<keyword id="KW-1035">Host cytoplasm</keyword>
<keyword id="KW-0378">Hydrolase</keyword>
<keyword id="KW-0460">Magnesium</keyword>
<keyword id="KW-0464">Manganese</keyword>
<keyword id="KW-0479">Metal-binding</keyword>
<keyword id="KW-0547">Nucleotide-binding</keyword>
<keyword id="KW-0548">Nucleotidyltransferase</keyword>
<keyword id="KW-0696">RNA-directed RNA polymerase</keyword>
<keyword id="KW-0808">Transferase</keyword>
<keyword id="KW-0693">Viral RNA replication</keyword>
<keyword id="KW-0946">Virion</keyword>
<gene>
    <name evidence="1" type="primary">L</name>
</gene>
<feature type="chain" id="PRO_0000361638" description="RNA-directed RNA polymerase L">
    <location>
        <begin position="1"/>
        <end position="2210"/>
    </location>
</feature>
<feature type="domain" description="RdRp catalytic" evidence="1">
    <location>
        <begin position="1171"/>
        <end position="1368"/>
    </location>
</feature>
<feature type="region of interest" description="Endonuclease" evidence="1">
    <location>
        <begin position="26"/>
        <end position="284"/>
    </location>
</feature>
<feature type="active site" evidence="1">
    <location>
        <position position="115"/>
    </location>
</feature>
<feature type="binding site" evidence="1">
    <location>
        <position position="51"/>
    </location>
    <ligand>
        <name>Mn(2+)</name>
        <dbReference type="ChEBI" id="CHEBI:29035"/>
        <label>1</label>
    </ligand>
</feature>
<feature type="binding site" evidence="1">
    <location>
        <position position="89"/>
    </location>
    <ligand>
        <name>Mn(2+)</name>
        <dbReference type="ChEBI" id="CHEBI:29035"/>
        <label>1</label>
    </ligand>
</feature>
<feature type="binding site" evidence="1">
    <location>
        <position position="89"/>
    </location>
    <ligand>
        <name>Mn(2+)</name>
        <dbReference type="ChEBI" id="CHEBI:29035"/>
        <label>2</label>
    </ligand>
</feature>
<feature type="binding site" evidence="1">
    <location>
        <position position="102"/>
    </location>
    <ligand>
        <name>Mn(2+)</name>
        <dbReference type="ChEBI" id="CHEBI:29035"/>
        <label>1</label>
    </ligand>
</feature>
<feature type="binding site" evidence="1">
    <location>
        <position position="1329"/>
    </location>
    <ligand>
        <name>Mg(2+)</name>
        <dbReference type="ChEBI" id="CHEBI:18420"/>
        <note>catalytic; for RdRp activity</note>
    </ligand>
</feature>